<dbReference type="EMBL" id="AF040387">
    <property type="protein sequence ID" value="AAC23590.1"/>
    <property type="molecule type" value="mRNA"/>
</dbReference>
<dbReference type="RefSeq" id="NP_001076181.1">
    <property type="nucleotide sequence ID" value="NM_001082712.1"/>
</dbReference>
<dbReference type="SMR" id="O77541"/>
<dbReference type="FunCoup" id="O77541">
    <property type="interactions" value="87"/>
</dbReference>
<dbReference type="STRING" id="9986.ENSOCUP00000036438"/>
<dbReference type="GlyCosmos" id="O77541">
    <property type="glycosylation" value="1 site, No reported glycans"/>
</dbReference>
<dbReference type="PaxDb" id="9986-ENSOCUP00000016507"/>
<dbReference type="GeneID" id="100009459"/>
<dbReference type="KEGG" id="ocu:100009459"/>
<dbReference type="CTD" id="966"/>
<dbReference type="eggNOG" id="ENOG502SA4P">
    <property type="taxonomic scope" value="Eukaryota"/>
</dbReference>
<dbReference type="InParanoid" id="O77541"/>
<dbReference type="OrthoDB" id="10011411at2759"/>
<dbReference type="Proteomes" id="UP000001811">
    <property type="component" value="Unplaced"/>
</dbReference>
<dbReference type="GO" id="GO:0005886">
    <property type="term" value="C:plasma membrane"/>
    <property type="evidence" value="ECO:0007669"/>
    <property type="project" value="UniProtKB-SubCell"/>
</dbReference>
<dbReference type="GO" id="GO:0098552">
    <property type="term" value="C:side of membrane"/>
    <property type="evidence" value="ECO:0007669"/>
    <property type="project" value="UniProtKB-KW"/>
</dbReference>
<dbReference type="GO" id="GO:0001848">
    <property type="term" value="F:complement binding"/>
    <property type="evidence" value="ECO:0007669"/>
    <property type="project" value="TreeGrafter"/>
</dbReference>
<dbReference type="GO" id="GO:0001971">
    <property type="term" value="P:negative regulation of activation of membrane attack complex"/>
    <property type="evidence" value="ECO:0007669"/>
    <property type="project" value="TreeGrafter"/>
</dbReference>
<dbReference type="CDD" id="cd23554">
    <property type="entry name" value="TFP_LU_ECD_CD59"/>
    <property type="match status" value="1"/>
</dbReference>
<dbReference type="Gene3D" id="2.10.60.10">
    <property type="entry name" value="CD59"/>
    <property type="match status" value="1"/>
</dbReference>
<dbReference type="InterPro" id="IPR056949">
    <property type="entry name" value="CD59"/>
</dbReference>
<dbReference type="InterPro" id="IPR016054">
    <property type="entry name" value="LY6_UPA_recep-like"/>
</dbReference>
<dbReference type="InterPro" id="IPR045860">
    <property type="entry name" value="Snake_toxin-like_sf"/>
</dbReference>
<dbReference type="PANTHER" id="PTHR10036">
    <property type="entry name" value="CD59 GLYCOPROTEIN"/>
    <property type="match status" value="1"/>
</dbReference>
<dbReference type="PANTHER" id="PTHR10036:SF24">
    <property type="entry name" value="CD59 GLYCOPROTEIN"/>
    <property type="match status" value="1"/>
</dbReference>
<dbReference type="Pfam" id="PF25152">
    <property type="entry name" value="CD59"/>
    <property type="match status" value="1"/>
</dbReference>
<dbReference type="SMART" id="SM00134">
    <property type="entry name" value="LU"/>
    <property type="match status" value="1"/>
</dbReference>
<dbReference type="SUPFAM" id="SSF57302">
    <property type="entry name" value="Snake toxin-like"/>
    <property type="match status" value="1"/>
</dbReference>
<reference key="1">
    <citation type="journal article" date="1998" name="J. Biol. Chem.">
        <title>Identity of the residues responsible for the species-restricted complement inhibitory function of human CD59.</title>
        <authorList>
            <person name="Zhao X.-J."/>
            <person name="Zhao J."/>
            <person name="Zhou Q."/>
            <person name="Sims P.J."/>
        </authorList>
    </citation>
    <scope>NUCLEOTIDE SEQUENCE [MRNA]</scope>
    <scope>PROTEIN SEQUENCE OF 25-64</scope>
    <source>
        <tissue>Erythrocyte</tissue>
        <tissue>Lymphocyte</tissue>
    </source>
</reference>
<proteinExistence type="evidence at protein level"/>
<protein>
    <recommendedName>
        <fullName>CD59 glycoprotein</fullName>
    </recommendedName>
    <alternativeName>
        <fullName>MAC-inhibitory protein</fullName>
        <shortName>MAC-IP</shortName>
    </alternativeName>
    <alternativeName>
        <fullName>Membrane attack complex inhibition factor</fullName>
        <shortName>MACIF</shortName>
    </alternativeName>
    <alternativeName>
        <fullName>Protectin</fullName>
    </alternativeName>
    <cdAntigenName>CD59</cdAntigenName>
</protein>
<organism>
    <name type="scientific">Oryctolagus cuniculus</name>
    <name type="common">Rabbit</name>
    <dbReference type="NCBI Taxonomy" id="9986"/>
    <lineage>
        <taxon>Eukaryota</taxon>
        <taxon>Metazoa</taxon>
        <taxon>Chordata</taxon>
        <taxon>Craniata</taxon>
        <taxon>Vertebrata</taxon>
        <taxon>Euteleostomi</taxon>
        <taxon>Mammalia</taxon>
        <taxon>Eutheria</taxon>
        <taxon>Euarchontoglires</taxon>
        <taxon>Glires</taxon>
        <taxon>Lagomorpha</taxon>
        <taxon>Leporidae</taxon>
        <taxon>Oryctolagus</taxon>
    </lineage>
</organism>
<gene>
    <name evidence="4" type="primary">CD59</name>
</gene>
<name>CD59_RABIT</name>
<evidence type="ECO:0000250" key="1">
    <source>
        <dbReference type="UniProtKB" id="P13987"/>
    </source>
</evidence>
<evidence type="ECO:0000255" key="2"/>
<evidence type="ECO:0000269" key="3">
    <source>
    </source>
</evidence>
<evidence type="ECO:0000303" key="4">
    <source>
    </source>
</evidence>
<keyword id="KW-1003">Cell membrane</keyword>
<keyword id="KW-0903">Direct protein sequencing</keyword>
<keyword id="KW-1015">Disulfide bond</keyword>
<keyword id="KW-0325">Glycoprotein</keyword>
<keyword id="KW-0336">GPI-anchor</keyword>
<keyword id="KW-0449">Lipoprotein</keyword>
<keyword id="KW-0472">Membrane</keyword>
<keyword id="KW-1185">Reference proteome</keyword>
<keyword id="KW-0964">Secreted</keyword>
<keyword id="KW-0732">Signal</keyword>
<feature type="signal peptide" evidence="3">
    <location>
        <begin position="1"/>
        <end position="24"/>
    </location>
</feature>
<feature type="chain" id="PRO_0000036122" description="CD59 glycoprotein">
    <location>
        <begin position="25"/>
        <end position="101"/>
    </location>
</feature>
<feature type="propeptide" id="PRO_0000036123" description="Removed in mature form" evidence="1">
    <location>
        <begin position="102"/>
        <end position="124"/>
    </location>
</feature>
<feature type="domain" description="UPAR/Ly6">
    <location>
        <begin position="25"/>
        <end position="101"/>
    </location>
</feature>
<feature type="lipid moiety-binding region" description="GPI-anchor amidated glycine" evidence="1">
    <location>
        <position position="101"/>
    </location>
</feature>
<feature type="glycosylation site" description="N-linked (GlcNAc...) asparagine" evidence="2">
    <location>
        <position position="37"/>
    </location>
</feature>
<feature type="disulfide bond" evidence="1">
    <location>
        <begin position="28"/>
        <end position="51"/>
    </location>
</feature>
<feature type="disulfide bond" evidence="1">
    <location>
        <begin position="31"/>
        <end position="38"/>
    </location>
</feature>
<feature type="disulfide bond" evidence="1">
    <location>
        <begin position="44"/>
        <end position="64"/>
    </location>
</feature>
<feature type="disulfide bond" evidence="1">
    <location>
        <begin position="70"/>
        <end position="88"/>
    </location>
</feature>
<feature type="disulfide bond" evidence="1">
    <location>
        <begin position="89"/>
        <end position="94"/>
    </location>
</feature>
<accession>O77541</accession>
<comment type="function">
    <text evidence="1">Potent inhibitor of the complement membrane attack complex (MAC) action, which protects self-cells from damage during complement activation. Acts by binding to the beta-haipins of C8 (C8A and C8B) components of the assembling MAC, forming an intermolecular beta-sheet that prevents incorporation of the multiple copies of C9 required for complete formation of the osmolytic pore.</text>
</comment>
<comment type="subunit">
    <text evidence="1">Interacts with T-cell surface antigen CD2.</text>
</comment>
<comment type="subcellular location">
    <subcellularLocation>
        <location evidence="1">Cell membrane</location>
        <topology evidence="1">Lipid-anchor</topology>
        <topology evidence="1">GPI-anchor</topology>
    </subcellularLocation>
    <subcellularLocation>
        <location evidence="1">Secreted</location>
    </subcellularLocation>
    <text evidence="1">Localizes to the cell surface. Soluble form found in a number of tissues.</text>
</comment>
<comment type="PTM">
    <text evidence="1">N- and O-glycosylated.</text>
</comment>
<sequence>MTSRGVHLLLRLLFLLAVFYSSDSSLMCYHCLLPSPNCSTVTNCTPNHDACLTAVSGPRVYRQCWRYEDCNFEFISNRLEENSLKYNCCRKDLCNGPEDDGTALTGRTVLLVAPLLAAARNLCL</sequence>